<evidence type="ECO:0000250" key="1"/>
<evidence type="ECO:0000255" key="2">
    <source>
        <dbReference type="HAMAP-Rule" id="MF_00100"/>
    </source>
</evidence>
<evidence type="ECO:0000256" key="3">
    <source>
        <dbReference type="SAM" id="MobiDB-lite"/>
    </source>
</evidence>
<gene>
    <name evidence="2" type="primary">infB</name>
    <name type="ordered locus">PMT9312_1587</name>
</gene>
<keyword id="KW-0963">Cytoplasm</keyword>
<keyword id="KW-0342">GTP-binding</keyword>
<keyword id="KW-0396">Initiation factor</keyword>
<keyword id="KW-0547">Nucleotide-binding</keyword>
<keyword id="KW-0648">Protein biosynthesis</keyword>
<comment type="function">
    <text evidence="2">One of the essential components for the initiation of protein synthesis. Protects formylmethionyl-tRNA from spontaneous hydrolysis and promotes its binding to the 30S ribosomal subunits. Also involved in the hydrolysis of GTP during the formation of the 70S ribosomal complex.</text>
</comment>
<comment type="subcellular location">
    <subcellularLocation>
        <location evidence="2">Cytoplasm</location>
    </subcellularLocation>
</comment>
<comment type="similarity">
    <text evidence="2">Belongs to the TRAFAC class translation factor GTPase superfamily. Classic translation factor GTPase family. IF-2 subfamily.</text>
</comment>
<proteinExistence type="inferred from homology"/>
<sequence length="1128" mass="123936">MTISDKIRIYELSRDLNLENKDILDAAQKLSISVKSHSSSISVEEAKKIKNLINKKNSDKQILSINKPSNKKDNYKQNKEDKSPVISSVKGKPLKDNSNKKQLLNKPLNKPESLKVIPNQLKNPNKPNIYNSSQSQANLTNQNTKSKPSEHFNKDKKTFRNNTIPPIKTPAKPPIQLIAKPKNINNNLKSNESSKNIPNSGDKRELSLKPDQNRNKPKPKNSNNRRNTPELVGAPIRRDDPNKQNNKQNITFKQTVSNRPGTPNRPGTPNRPGMPNRPGLRNKPTDQGRPGSFNRQANPNRAGAPNRPGMPNRPGLRNKPTDQGRPGSFNRQANPNRAGAPNRPGMPNRPGSRFNSQKSTGIRKPVSPNELLQLQKTNKSEKDTLAKTNNQKQNIESPKQKAKAPASRPNAVPSSKKPPHRPFSNSSKKPGRKDWDDSAKLEALRNKNPQKQRQKVHIIGENDDSLTSETSGYSGEKISILSASLARPKKEKSEESKSHKSTKQFKKKKKETTRQRQKRRAMELKAAKEAKQVRPEMIIVPEDNLTVQELADKLSLESSEIIKSLFFKGITATVTQSLDLATIETVAEEFGVPVLQDDIQEAAEKTVDMIESDDFDSLIKRPPVITVMGHVDHGKTSLLDSIRESRVASGEAGGITQHIGAYQVEFKHESKKKKLTFLDTPGHEAFTAMRARGTKVTDVAVLVVAADDGCRPQTLEAISHARAAKVPIVVAINKIDKEGASPERVKQELSEKDLIAEDWGGDTVMVPVSAIKKQNIDKLLEMILLVSEVEDLQANPDRSAKGTVIEAHLDKAKGPVATLLVQNGTLKSGDVLAAGSVLGKIRAMVDEHGNRIKEAGPSFPVEALGFSEVPTAGDEFEVYPDEKTARAIVGDRATDARATKLAQQMASRRVTLSSLSTQANDGELKELNLILKADVQGSVEAILGSLEQLPKNEVQVRVLLSAPGEITETDIDLAAASGSVIIGFNTSLASGAKRAADANDVDIREYEVIYKLLEDIQLAMEGLLEPDLVEESLGKAEVRATFAVGKGAIAGCYIQTGKLQRNCSLRVIRSDKVIFEGNLDSLKRSKDDVKEVNTGFECGVGCDKFSSWTEGDIIEAFKFVTKKRTLTQ</sequence>
<feature type="chain" id="PRO_1000008300" description="Translation initiation factor IF-2">
    <location>
        <begin position="1"/>
        <end position="1128"/>
    </location>
</feature>
<feature type="domain" description="tr-type G">
    <location>
        <begin position="620"/>
        <end position="792"/>
    </location>
</feature>
<feature type="region of interest" description="Disordered" evidence="3">
    <location>
        <begin position="57"/>
        <end position="519"/>
    </location>
</feature>
<feature type="region of interest" description="G1" evidence="1">
    <location>
        <begin position="629"/>
        <end position="636"/>
    </location>
</feature>
<feature type="region of interest" description="G2" evidence="1">
    <location>
        <begin position="654"/>
        <end position="658"/>
    </location>
</feature>
<feature type="region of interest" description="G3" evidence="1">
    <location>
        <begin position="679"/>
        <end position="682"/>
    </location>
</feature>
<feature type="region of interest" description="G4" evidence="1">
    <location>
        <begin position="733"/>
        <end position="736"/>
    </location>
</feature>
<feature type="region of interest" description="G5" evidence="1">
    <location>
        <begin position="769"/>
        <end position="771"/>
    </location>
</feature>
<feature type="compositionally biased region" description="Basic and acidic residues" evidence="3">
    <location>
        <begin position="70"/>
        <end position="83"/>
    </location>
</feature>
<feature type="compositionally biased region" description="Low complexity" evidence="3">
    <location>
        <begin position="100"/>
        <end position="110"/>
    </location>
</feature>
<feature type="compositionally biased region" description="Polar residues" evidence="3">
    <location>
        <begin position="120"/>
        <end position="146"/>
    </location>
</feature>
<feature type="compositionally biased region" description="Basic and acidic residues" evidence="3">
    <location>
        <begin position="147"/>
        <end position="158"/>
    </location>
</feature>
<feature type="compositionally biased region" description="Low complexity" evidence="3">
    <location>
        <begin position="182"/>
        <end position="196"/>
    </location>
</feature>
<feature type="compositionally biased region" description="Basic and acidic residues" evidence="3">
    <location>
        <begin position="201"/>
        <end position="214"/>
    </location>
</feature>
<feature type="compositionally biased region" description="Polar residues" evidence="3">
    <location>
        <begin position="243"/>
        <end position="267"/>
    </location>
</feature>
<feature type="compositionally biased region" description="Polar residues" evidence="3">
    <location>
        <begin position="386"/>
        <end position="397"/>
    </location>
</feature>
<feature type="compositionally biased region" description="Basic and acidic residues" evidence="3">
    <location>
        <begin position="432"/>
        <end position="445"/>
    </location>
</feature>
<feature type="compositionally biased region" description="Basic residues" evidence="3">
    <location>
        <begin position="499"/>
        <end position="519"/>
    </location>
</feature>
<feature type="binding site" evidence="2">
    <location>
        <begin position="629"/>
        <end position="636"/>
    </location>
    <ligand>
        <name>GTP</name>
        <dbReference type="ChEBI" id="CHEBI:37565"/>
    </ligand>
</feature>
<feature type="binding site" evidence="2">
    <location>
        <begin position="679"/>
        <end position="683"/>
    </location>
    <ligand>
        <name>GTP</name>
        <dbReference type="ChEBI" id="CHEBI:37565"/>
    </ligand>
</feature>
<feature type="binding site" evidence="2">
    <location>
        <begin position="733"/>
        <end position="736"/>
    </location>
    <ligand>
        <name>GTP</name>
        <dbReference type="ChEBI" id="CHEBI:37565"/>
    </ligand>
</feature>
<organism>
    <name type="scientific">Prochlorococcus marinus (strain MIT 9312)</name>
    <dbReference type="NCBI Taxonomy" id="74546"/>
    <lineage>
        <taxon>Bacteria</taxon>
        <taxon>Bacillati</taxon>
        <taxon>Cyanobacteriota</taxon>
        <taxon>Cyanophyceae</taxon>
        <taxon>Synechococcales</taxon>
        <taxon>Prochlorococcaceae</taxon>
        <taxon>Prochlorococcus</taxon>
    </lineage>
</organism>
<name>IF2_PROM9</name>
<reference key="1">
    <citation type="journal article" date="2006" name="Science">
        <title>Genomic islands and the ecology and evolution of Prochlorococcus.</title>
        <authorList>
            <person name="Coleman M.L."/>
            <person name="Sullivan M.B."/>
            <person name="Martiny A.C."/>
            <person name="Steglich C."/>
            <person name="Barry K."/>
            <person name="Delong E.F."/>
            <person name="Chisholm S.W."/>
        </authorList>
    </citation>
    <scope>NUCLEOTIDE SEQUENCE [LARGE SCALE GENOMIC DNA]</scope>
    <source>
        <strain>MIT 9312</strain>
    </source>
</reference>
<dbReference type="EMBL" id="CP000111">
    <property type="protein sequence ID" value="ABB50647.1"/>
    <property type="molecule type" value="Genomic_DNA"/>
</dbReference>
<dbReference type="RefSeq" id="WP_011377129.1">
    <property type="nucleotide sequence ID" value="NC_007577.1"/>
</dbReference>
<dbReference type="SMR" id="Q318P8"/>
<dbReference type="STRING" id="74546.PMT9312_1587"/>
<dbReference type="KEGG" id="pmi:PMT9312_1587"/>
<dbReference type="eggNOG" id="COG0532">
    <property type="taxonomic scope" value="Bacteria"/>
</dbReference>
<dbReference type="HOGENOM" id="CLU_006301_7_0_3"/>
<dbReference type="OrthoDB" id="9811804at2"/>
<dbReference type="Proteomes" id="UP000002715">
    <property type="component" value="Chromosome"/>
</dbReference>
<dbReference type="GO" id="GO:0005829">
    <property type="term" value="C:cytosol"/>
    <property type="evidence" value="ECO:0007669"/>
    <property type="project" value="TreeGrafter"/>
</dbReference>
<dbReference type="GO" id="GO:0005525">
    <property type="term" value="F:GTP binding"/>
    <property type="evidence" value="ECO:0007669"/>
    <property type="project" value="UniProtKB-KW"/>
</dbReference>
<dbReference type="GO" id="GO:0003924">
    <property type="term" value="F:GTPase activity"/>
    <property type="evidence" value="ECO:0007669"/>
    <property type="project" value="UniProtKB-UniRule"/>
</dbReference>
<dbReference type="GO" id="GO:0003743">
    <property type="term" value="F:translation initiation factor activity"/>
    <property type="evidence" value="ECO:0007669"/>
    <property type="project" value="UniProtKB-UniRule"/>
</dbReference>
<dbReference type="CDD" id="cd01887">
    <property type="entry name" value="IF2_eIF5B"/>
    <property type="match status" value="1"/>
</dbReference>
<dbReference type="CDD" id="cd03702">
    <property type="entry name" value="IF2_mtIF2_II"/>
    <property type="match status" value="1"/>
</dbReference>
<dbReference type="CDD" id="cd03692">
    <property type="entry name" value="mtIF2_IVc"/>
    <property type="match status" value="1"/>
</dbReference>
<dbReference type="FunFam" id="2.40.30.10:FF:000007">
    <property type="entry name" value="Translation initiation factor IF-2"/>
    <property type="match status" value="1"/>
</dbReference>
<dbReference type="FunFam" id="2.40.30.10:FF:000008">
    <property type="entry name" value="Translation initiation factor IF-2"/>
    <property type="match status" value="1"/>
</dbReference>
<dbReference type="FunFam" id="3.40.50.10050:FF:000001">
    <property type="entry name" value="Translation initiation factor IF-2"/>
    <property type="match status" value="1"/>
</dbReference>
<dbReference type="FunFam" id="3.40.50.300:FF:000019">
    <property type="entry name" value="Translation initiation factor IF-2"/>
    <property type="match status" value="1"/>
</dbReference>
<dbReference type="Gene3D" id="1.10.10.2480">
    <property type="match status" value="1"/>
</dbReference>
<dbReference type="Gene3D" id="3.40.50.300">
    <property type="entry name" value="P-loop containing nucleotide triphosphate hydrolases"/>
    <property type="match status" value="1"/>
</dbReference>
<dbReference type="Gene3D" id="2.40.30.10">
    <property type="entry name" value="Translation factors"/>
    <property type="match status" value="2"/>
</dbReference>
<dbReference type="Gene3D" id="3.40.50.10050">
    <property type="entry name" value="Translation initiation factor IF- 2, domain 3"/>
    <property type="match status" value="1"/>
</dbReference>
<dbReference type="HAMAP" id="MF_00100_B">
    <property type="entry name" value="IF_2_B"/>
    <property type="match status" value="1"/>
</dbReference>
<dbReference type="InterPro" id="IPR053905">
    <property type="entry name" value="EF-G-like_DII"/>
</dbReference>
<dbReference type="InterPro" id="IPR044145">
    <property type="entry name" value="IF2_II"/>
</dbReference>
<dbReference type="InterPro" id="IPR006847">
    <property type="entry name" value="IF2_N"/>
</dbReference>
<dbReference type="InterPro" id="IPR027417">
    <property type="entry name" value="P-loop_NTPase"/>
</dbReference>
<dbReference type="InterPro" id="IPR005225">
    <property type="entry name" value="Small_GTP-bd"/>
</dbReference>
<dbReference type="InterPro" id="IPR000795">
    <property type="entry name" value="T_Tr_GTP-bd_dom"/>
</dbReference>
<dbReference type="InterPro" id="IPR000178">
    <property type="entry name" value="TF_IF2_bacterial-like"/>
</dbReference>
<dbReference type="InterPro" id="IPR015760">
    <property type="entry name" value="TIF_IF2"/>
</dbReference>
<dbReference type="InterPro" id="IPR023115">
    <property type="entry name" value="TIF_IF2_dom3"/>
</dbReference>
<dbReference type="InterPro" id="IPR036925">
    <property type="entry name" value="TIF_IF2_dom3_sf"/>
</dbReference>
<dbReference type="InterPro" id="IPR009000">
    <property type="entry name" value="Transl_B-barrel_sf"/>
</dbReference>
<dbReference type="NCBIfam" id="TIGR00487">
    <property type="entry name" value="IF-2"/>
    <property type="match status" value="1"/>
</dbReference>
<dbReference type="NCBIfam" id="TIGR00231">
    <property type="entry name" value="small_GTP"/>
    <property type="match status" value="1"/>
</dbReference>
<dbReference type="PANTHER" id="PTHR43381:SF5">
    <property type="entry name" value="TR-TYPE G DOMAIN-CONTAINING PROTEIN"/>
    <property type="match status" value="1"/>
</dbReference>
<dbReference type="PANTHER" id="PTHR43381">
    <property type="entry name" value="TRANSLATION INITIATION FACTOR IF-2-RELATED"/>
    <property type="match status" value="1"/>
</dbReference>
<dbReference type="Pfam" id="PF22042">
    <property type="entry name" value="EF-G_D2"/>
    <property type="match status" value="1"/>
</dbReference>
<dbReference type="Pfam" id="PF00009">
    <property type="entry name" value="GTP_EFTU"/>
    <property type="match status" value="1"/>
</dbReference>
<dbReference type="Pfam" id="PF11987">
    <property type="entry name" value="IF-2"/>
    <property type="match status" value="1"/>
</dbReference>
<dbReference type="Pfam" id="PF04760">
    <property type="entry name" value="IF2_N"/>
    <property type="match status" value="2"/>
</dbReference>
<dbReference type="PRINTS" id="PR00315">
    <property type="entry name" value="ELONGATNFCT"/>
</dbReference>
<dbReference type="SUPFAM" id="SSF52156">
    <property type="entry name" value="Initiation factor IF2/eIF5b, domain 3"/>
    <property type="match status" value="1"/>
</dbReference>
<dbReference type="SUPFAM" id="SSF52540">
    <property type="entry name" value="P-loop containing nucleoside triphosphate hydrolases"/>
    <property type="match status" value="1"/>
</dbReference>
<dbReference type="SUPFAM" id="SSF50447">
    <property type="entry name" value="Translation proteins"/>
    <property type="match status" value="2"/>
</dbReference>
<dbReference type="PROSITE" id="PS51722">
    <property type="entry name" value="G_TR_2"/>
    <property type="match status" value="1"/>
</dbReference>
<dbReference type="PROSITE" id="PS01176">
    <property type="entry name" value="IF2"/>
    <property type="match status" value="1"/>
</dbReference>
<accession>Q318P8</accession>
<protein>
    <recommendedName>
        <fullName evidence="2">Translation initiation factor IF-2</fullName>
    </recommendedName>
</protein>